<gene>
    <name evidence="1" type="primary">thiG</name>
    <name type="ordered locus">Syncc9902_0051</name>
</gene>
<protein>
    <recommendedName>
        <fullName evidence="1">Thiazole synthase</fullName>
        <ecNumber evidence="1">2.8.1.10</ecNumber>
    </recommendedName>
</protein>
<proteinExistence type="inferred from homology"/>
<comment type="function">
    <text evidence="1">Catalyzes the rearrangement of 1-deoxy-D-xylulose 5-phosphate (DXP) to produce the thiazole phosphate moiety of thiamine. Sulfur is provided by the thiocarboxylate moiety of the carrier protein ThiS. In vitro, sulfur can be provided by H(2)S.</text>
</comment>
<comment type="catalytic activity">
    <reaction evidence="1">
        <text>[ThiS sulfur-carrier protein]-C-terminal-Gly-aminoethanethioate + 2-iminoacetate + 1-deoxy-D-xylulose 5-phosphate = [ThiS sulfur-carrier protein]-C-terminal Gly-Gly + 2-[(2R,5Z)-2-carboxy-4-methylthiazol-5(2H)-ylidene]ethyl phosphate + 2 H2O + H(+)</text>
        <dbReference type="Rhea" id="RHEA:26297"/>
        <dbReference type="Rhea" id="RHEA-COMP:12909"/>
        <dbReference type="Rhea" id="RHEA-COMP:19908"/>
        <dbReference type="ChEBI" id="CHEBI:15377"/>
        <dbReference type="ChEBI" id="CHEBI:15378"/>
        <dbReference type="ChEBI" id="CHEBI:57792"/>
        <dbReference type="ChEBI" id="CHEBI:62899"/>
        <dbReference type="ChEBI" id="CHEBI:77846"/>
        <dbReference type="ChEBI" id="CHEBI:90778"/>
        <dbReference type="ChEBI" id="CHEBI:232372"/>
        <dbReference type="EC" id="2.8.1.10"/>
    </reaction>
</comment>
<comment type="pathway">
    <text evidence="1">Cofactor biosynthesis; thiamine diphosphate biosynthesis.</text>
</comment>
<comment type="subunit">
    <text evidence="1">Homotetramer. Forms heterodimers with either ThiH or ThiS.</text>
</comment>
<comment type="subcellular location">
    <subcellularLocation>
        <location evidence="1">Cytoplasm</location>
    </subcellularLocation>
</comment>
<comment type="similarity">
    <text evidence="1">Belongs to the ThiG family.</text>
</comment>
<dbReference type="EC" id="2.8.1.10" evidence="1"/>
<dbReference type="EMBL" id="CP000097">
    <property type="protein sequence ID" value="ABB25026.1"/>
    <property type="molecule type" value="Genomic_DNA"/>
</dbReference>
<dbReference type="RefSeq" id="WP_011358894.1">
    <property type="nucleotide sequence ID" value="NC_007513.1"/>
</dbReference>
<dbReference type="SMR" id="Q3B0V2"/>
<dbReference type="STRING" id="316279.Syncc9902_0051"/>
<dbReference type="KEGG" id="sye:Syncc9902_0051"/>
<dbReference type="eggNOG" id="COG2022">
    <property type="taxonomic scope" value="Bacteria"/>
</dbReference>
<dbReference type="HOGENOM" id="CLU_062233_1_0_3"/>
<dbReference type="OrthoDB" id="9805935at2"/>
<dbReference type="UniPathway" id="UPA00060"/>
<dbReference type="Proteomes" id="UP000002712">
    <property type="component" value="Chromosome"/>
</dbReference>
<dbReference type="GO" id="GO:0005737">
    <property type="term" value="C:cytoplasm"/>
    <property type="evidence" value="ECO:0007669"/>
    <property type="project" value="UniProtKB-SubCell"/>
</dbReference>
<dbReference type="GO" id="GO:1990107">
    <property type="term" value="F:thiazole synthase activity"/>
    <property type="evidence" value="ECO:0007669"/>
    <property type="project" value="UniProtKB-EC"/>
</dbReference>
<dbReference type="GO" id="GO:0009229">
    <property type="term" value="P:thiamine diphosphate biosynthetic process"/>
    <property type="evidence" value="ECO:0007669"/>
    <property type="project" value="UniProtKB-UniRule"/>
</dbReference>
<dbReference type="CDD" id="cd04728">
    <property type="entry name" value="ThiG"/>
    <property type="match status" value="1"/>
</dbReference>
<dbReference type="Gene3D" id="3.20.20.70">
    <property type="entry name" value="Aldolase class I"/>
    <property type="match status" value="1"/>
</dbReference>
<dbReference type="HAMAP" id="MF_00443">
    <property type="entry name" value="ThiG"/>
    <property type="match status" value="1"/>
</dbReference>
<dbReference type="InterPro" id="IPR013785">
    <property type="entry name" value="Aldolase_TIM"/>
</dbReference>
<dbReference type="InterPro" id="IPR033983">
    <property type="entry name" value="Thiazole_synthase_ThiG"/>
</dbReference>
<dbReference type="InterPro" id="IPR008867">
    <property type="entry name" value="ThiG"/>
</dbReference>
<dbReference type="PANTHER" id="PTHR34266">
    <property type="entry name" value="THIAZOLE SYNTHASE"/>
    <property type="match status" value="1"/>
</dbReference>
<dbReference type="PANTHER" id="PTHR34266:SF2">
    <property type="entry name" value="THIAZOLE SYNTHASE"/>
    <property type="match status" value="1"/>
</dbReference>
<dbReference type="Pfam" id="PF05690">
    <property type="entry name" value="ThiG"/>
    <property type="match status" value="1"/>
</dbReference>
<dbReference type="SUPFAM" id="SSF110399">
    <property type="entry name" value="ThiG-like"/>
    <property type="match status" value="1"/>
</dbReference>
<feature type="chain" id="PRO_0000236370" description="Thiazole synthase">
    <location>
        <begin position="1"/>
        <end position="273"/>
    </location>
</feature>
<feature type="region of interest" description="Disordered" evidence="2">
    <location>
        <begin position="251"/>
        <end position="273"/>
    </location>
</feature>
<feature type="compositionally biased region" description="Polar residues" evidence="2">
    <location>
        <begin position="258"/>
        <end position="267"/>
    </location>
</feature>
<feature type="active site" description="Schiff-base intermediate with DXP" evidence="1">
    <location>
        <position position="111"/>
    </location>
</feature>
<feature type="binding site" evidence="1">
    <location>
        <position position="172"/>
    </location>
    <ligand>
        <name>1-deoxy-D-xylulose 5-phosphate</name>
        <dbReference type="ChEBI" id="CHEBI:57792"/>
    </ligand>
</feature>
<feature type="binding site" evidence="1">
    <location>
        <begin position="198"/>
        <end position="199"/>
    </location>
    <ligand>
        <name>1-deoxy-D-xylulose 5-phosphate</name>
        <dbReference type="ChEBI" id="CHEBI:57792"/>
    </ligand>
</feature>
<feature type="binding site" evidence="1">
    <location>
        <begin position="220"/>
        <end position="221"/>
    </location>
    <ligand>
        <name>1-deoxy-D-xylulose 5-phosphate</name>
        <dbReference type="ChEBI" id="CHEBI:57792"/>
    </ligand>
</feature>
<sequence>MVSTSNGSDPLTIGGRLFSCRLLTGTGKYPSINSMQSSIERSACEMVTVAVRRVQTGAAGHTGLMEAIDWSRIWMLPNTAGCTNAEEAIRVARLGRELAKLAGQEDNNFIKLEVIPDSRHLLPDPIGTLQAAEALVKEGFTVLPYINADPLLAQRLEEVGCATVMPLGSPIGSGQGLNNAANIALIIENATVPVVVDAGIGVPSEAAQAMEMGADAVLVNSAIALAGDPPSMAEAMGKAVIAGRMAYSSGRLPRRGQASASSPTTGLISGKDK</sequence>
<organism>
    <name type="scientific">Synechococcus sp. (strain CC9902)</name>
    <dbReference type="NCBI Taxonomy" id="316279"/>
    <lineage>
        <taxon>Bacteria</taxon>
        <taxon>Bacillati</taxon>
        <taxon>Cyanobacteriota</taxon>
        <taxon>Cyanophyceae</taxon>
        <taxon>Synechococcales</taxon>
        <taxon>Synechococcaceae</taxon>
        <taxon>Synechococcus</taxon>
    </lineage>
</organism>
<reference key="1">
    <citation type="submission" date="2005-08" db="EMBL/GenBank/DDBJ databases">
        <title>Complete sequence of Synechococcus sp. CC9902.</title>
        <authorList>
            <person name="Copeland A."/>
            <person name="Lucas S."/>
            <person name="Lapidus A."/>
            <person name="Barry K."/>
            <person name="Detter J.C."/>
            <person name="Glavina T."/>
            <person name="Hammon N."/>
            <person name="Israni S."/>
            <person name="Pitluck S."/>
            <person name="Martinez M."/>
            <person name="Schmutz J."/>
            <person name="Larimer F."/>
            <person name="Land M."/>
            <person name="Kyrpides N."/>
            <person name="Ivanova N."/>
            <person name="Richardson P."/>
        </authorList>
    </citation>
    <scope>NUCLEOTIDE SEQUENCE [LARGE SCALE GENOMIC DNA]</scope>
    <source>
        <strain>CC9902</strain>
    </source>
</reference>
<evidence type="ECO:0000255" key="1">
    <source>
        <dbReference type="HAMAP-Rule" id="MF_00443"/>
    </source>
</evidence>
<evidence type="ECO:0000256" key="2">
    <source>
        <dbReference type="SAM" id="MobiDB-lite"/>
    </source>
</evidence>
<name>THIG_SYNS9</name>
<accession>Q3B0V2</accession>
<keyword id="KW-0963">Cytoplasm</keyword>
<keyword id="KW-1185">Reference proteome</keyword>
<keyword id="KW-0704">Schiff base</keyword>
<keyword id="KW-0784">Thiamine biosynthesis</keyword>
<keyword id="KW-0808">Transferase</keyword>